<proteinExistence type="inferred from homology"/>
<accession>Q6LUM5</accession>
<comment type="function">
    <text evidence="1">Accelerates the degradation of transcripts by removing pyrophosphate from the 5'-end of triphosphorylated RNA, leading to a more labile monophosphorylated state that can stimulate subsequent ribonuclease cleavage.</text>
</comment>
<comment type="cofactor">
    <cofactor evidence="1">
        <name>a divalent metal cation</name>
        <dbReference type="ChEBI" id="CHEBI:60240"/>
    </cofactor>
</comment>
<comment type="similarity">
    <text evidence="1">Belongs to the Nudix hydrolase family. RppH subfamily.</text>
</comment>
<dbReference type="EC" id="3.6.1.-" evidence="1"/>
<dbReference type="EMBL" id="CR378664">
    <property type="protein sequence ID" value="CAG19000.1"/>
    <property type="molecule type" value="Genomic_DNA"/>
</dbReference>
<dbReference type="RefSeq" id="WP_011217351.1">
    <property type="nucleotide sequence ID" value="NC_006370.1"/>
</dbReference>
<dbReference type="SMR" id="Q6LUM5"/>
<dbReference type="STRING" id="298386.PBPRA0577"/>
<dbReference type="KEGG" id="ppr:PBPRA0577"/>
<dbReference type="eggNOG" id="COG0494">
    <property type="taxonomic scope" value="Bacteria"/>
</dbReference>
<dbReference type="HOGENOM" id="CLU_087195_3_2_6"/>
<dbReference type="Proteomes" id="UP000000593">
    <property type="component" value="Chromosome 1"/>
</dbReference>
<dbReference type="GO" id="GO:0005737">
    <property type="term" value="C:cytoplasm"/>
    <property type="evidence" value="ECO:0007669"/>
    <property type="project" value="TreeGrafter"/>
</dbReference>
<dbReference type="GO" id="GO:0034353">
    <property type="term" value="F:mRNA 5'-diphosphatase activity"/>
    <property type="evidence" value="ECO:0007669"/>
    <property type="project" value="TreeGrafter"/>
</dbReference>
<dbReference type="GO" id="GO:0006402">
    <property type="term" value="P:mRNA catabolic process"/>
    <property type="evidence" value="ECO:0007669"/>
    <property type="project" value="TreeGrafter"/>
</dbReference>
<dbReference type="CDD" id="cd03671">
    <property type="entry name" value="NUDIX_Ap4A_hydrolase_plant_like"/>
    <property type="match status" value="1"/>
</dbReference>
<dbReference type="FunFam" id="3.90.79.10:FF:000001">
    <property type="entry name" value="RNA pyrophosphohydrolase"/>
    <property type="match status" value="1"/>
</dbReference>
<dbReference type="Gene3D" id="3.90.79.10">
    <property type="entry name" value="Nucleoside Triphosphate Pyrophosphohydrolase"/>
    <property type="match status" value="1"/>
</dbReference>
<dbReference type="HAMAP" id="MF_00298">
    <property type="entry name" value="Nudix_RppH"/>
    <property type="match status" value="1"/>
</dbReference>
<dbReference type="InterPro" id="IPR020476">
    <property type="entry name" value="Nudix_hydrolase"/>
</dbReference>
<dbReference type="InterPro" id="IPR015797">
    <property type="entry name" value="NUDIX_hydrolase-like_dom_sf"/>
</dbReference>
<dbReference type="InterPro" id="IPR020084">
    <property type="entry name" value="NUDIX_hydrolase_CS"/>
</dbReference>
<dbReference type="InterPro" id="IPR000086">
    <property type="entry name" value="NUDIX_hydrolase_dom"/>
</dbReference>
<dbReference type="InterPro" id="IPR022927">
    <property type="entry name" value="RppH"/>
</dbReference>
<dbReference type="NCBIfam" id="NF001934">
    <property type="entry name" value="PRK00714.1-1"/>
    <property type="match status" value="1"/>
</dbReference>
<dbReference type="NCBIfam" id="NF001937">
    <property type="entry name" value="PRK00714.1-4"/>
    <property type="match status" value="1"/>
</dbReference>
<dbReference type="NCBIfam" id="NF001938">
    <property type="entry name" value="PRK00714.1-5"/>
    <property type="match status" value="1"/>
</dbReference>
<dbReference type="PANTHER" id="PTHR23114">
    <property type="entry name" value="M7GPPPN-MRNA HYDROLASE"/>
    <property type="match status" value="1"/>
</dbReference>
<dbReference type="PANTHER" id="PTHR23114:SF17">
    <property type="entry name" value="M7GPPPN-MRNA HYDROLASE"/>
    <property type="match status" value="1"/>
</dbReference>
<dbReference type="Pfam" id="PF00293">
    <property type="entry name" value="NUDIX"/>
    <property type="match status" value="1"/>
</dbReference>
<dbReference type="PRINTS" id="PR00502">
    <property type="entry name" value="NUDIXFAMILY"/>
</dbReference>
<dbReference type="SUPFAM" id="SSF55811">
    <property type="entry name" value="Nudix"/>
    <property type="match status" value="1"/>
</dbReference>
<dbReference type="PROSITE" id="PS51462">
    <property type="entry name" value="NUDIX"/>
    <property type="match status" value="1"/>
</dbReference>
<dbReference type="PROSITE" id="PS00893">
    <property type="entry name" value="NUDIX_BOX"/>
    <property type="match status" value="1"/>
</dbReference>
<feature type="chain" id="PRO_0000231922" description="RNA pyrophosphohydrolase">
    <location>
        <begin position="1"/>
        <end position="174"/>
    </location>
</feature>
<feature type="domain" description="Nudix hydrolase" evidence="1">
    <location>
        <begin position="6"/>
        <end position="149"/>
    </location>
</feature>
<feature type="short sequence motif" description="Nudix box">
    <location>
        <begin position="38"/>
        <end position="59"/>
    </location>
</feature>
<sequence length="174" mass="20867">MIDGDGYRPNVGIVICNSHGQVFWARRYGQHSWQFPQGGIDEGETPEQAMYRELYEEVGLTKKDVRILASSRHWLRYKLPKRLVRWDSKPVCIGQKQKWFLLSLECDESRVNMQRGSTPEFDGWRWVSYWYPVRQVVSFKRDVYRRALKEFAAIAMPFKERKERKLKRYKSKRG</sequence>
<protein>
    <recommendedName>
        <fullName evidence="1">RNA pyrophosphohydrolase</fullName>
        <ecNumber evidence="1">3.6.1.-</ecNumber>
    </recommendedName>
    <alternativeName>
        <fullName evidence="1">(Di)nucleoside polyphosphate hydrolase</fullName>
    </alternativeName>
</protein>
<gene>
    <name evidence="1" type="primary">rppH</name>
    <name evidence="1" type="synonym">nudH</name>
    <name type="ordered locus">PBPRA0577</name>
</gene>
<name>RPPH_PHOPR</name>
<keyword id="KW-0378">Hydrolase</keyword>
<keyword id="KW-1185">Reference proteome</keyword>
<organism>
    <name type="scientific">Photobacterium profundum (strain SS9)</name>
    <dbReference type="NCBI Taxonomy" id="298386"/>
    <lineage>
        <taxon>Bacteria</taxon>
        <taxon>Pseudomonadati</taxon>
        <taxon>Pseudomonadota</taxon>
        <taxon>Gammaproteobacteria</taxon>
        <taxon>Vibrionales</taxon>
        <taxon>Vibrionaceae</taxon>
        <taxon>Photobacterium</taxon>
    </lineage>
</organism>
<reference key="1">
    <citation type="journal article" date="2005" name="Science">
        <title>Life at depth: Photobacterium profundum genome sequence and expression analysis.</title>
        <authorList>
            <person name="Vezzi A."/>
            <person name="Campanaro S."/>
            <person name="D'Angelo M."/>
            <person name="Simonato F."/>
            <person name="Vitulo N."/>
            <person name="Lauro F.M."/>
            <person name="Cestaro A."/>
            <person name="Malacrida G."/>
            <person name="Simionati B."/>
            <person name="Cannata N."/>
            <person name="Romualdi C."/>
            <person name="Bartlett D.H."/>
            <person name="Valle G."/>
        </authorList>
    </citation>
    <scope>NUCLEOTIDE SEQUENCE [LARGE SCALE GENOMIC DNA]</scope>
    <source>
        <strain>ATCC BAA-1253 / SS9</strain>
    </source>
</reference>
<evidence type="ECO:0000255" key="1">
    <source>
        <dbReference type="HAMAP-Rule" id="MF_00298"/>
    </source>
</evidence>